<sequence>MSAAPAQAHPPSRLTLYRQLIRWDRPAGWLLLLWPTLGALWLAAGGFPGWHLLAVFTLGTVLMRSAGCCINDVADREFDRHVKRTAERPVTRGAVSVKEALAVGAVLALAAFALVLTTNALTIALSFPALAVAVAYPYAKRCVAMPQAVLGVAFSFGIPMAFSAVRGGNGAWGLAALNAAVPWWAWGLLIGNLFWVLAYDTEYAMVDRDDDLKIGIKTSAITLGRHDVTAVMSFYQLYLLAWGAIGFWQGLGVAFAAGLAAAAVQVAWHHTLIRDRSRDGCFKAFRLNHWVGFAVFAGIVVDLGWRA</sequence>
<reference key="1">
    <citation type="journal article" date="2007" name="J. Bacteriol.">
        <title>Whole-genome analysis of the methyl tert-butyl ether-degrading beta-proteobacterium Methylibium petroleiphilum PM1.</title>
        <authorList>
            <person name="Kane S.R."/>
            <person name="Chakicherla A.Y."/>
            <person name="Chain P.S.G."/>
            <person name="Schmidt R."/>
            <person name="Shin M.W."/>
            <person name="Legler T.C."/>
            <person name="Scow K.M."/>
            <person name="Larimer F.W."/>
            <person name="Lucas S.M."/>
            <person name="Richardson P.M."/>
            <person name="Hristova K.R."/>
        </authorList>
    </citation>
    <scope>NUCLEOTIDE SEQUENCE [LARGE SCALE GENOMIC DNA]</scope>
    <source>
        <strain>ATCC BAA-1232 / LMG 22953 / PM1</strain>
    </source>
</reference>
<dbReference type="EC" id="2.5.1.39" evidence="1"/>
<dbReference type="EMBL" id="CP000555">
    <property type="protein sequence ID" value="ABM96696.1"/>
    <property type="molecule type" value="Genomic_DNA"/>
</dbReference>
<dbReference type="RefSeq" id="WP_011831316.1">
    <property type="nucleotide sequence ID" value="NC_008825.1"/>
</dbReference>
<dbReference type="SMR" id="A2SMA7"/>
<dbReference type="STRING" id="420662.Mpe_A3743"/>
<dbReference type="KEGG" id="mpt:Mpe_A3743"/>
<dbReference type="eggNOG" id="COG0382">
    <property type="taxonomic scope" value="Bacteria"/>
</dbReference>
<dbReference type="HOGENOM" id="CLU_034879_1_1_4"/>
<dbReference type="UniPathway" id="UPA00232"/>
<dbReference type="Proteomes" id="UP000000366">
    <property type="component" value="Chromosome"/>
</dbReference>
<dbReference type="GO" id="GO:0005886">
    <property type="term" value="C:plasma membrane"/>
    <property type="evidence" value="ECO:0007669"/>
    <property type="project" value="UniProtKB-SubCell"/>
</dbReference>
<dbReference type="GO" id="GO:0008412">
    <property type="term" value="F:4-hydroxybenzoate polyprenyltransferase activity"/>
    <property type="evidence" value="ECO:0007669"/>
    <property type="project" value="UniProtKB-UniRule"/>
</dbReference>
<dbReference type="GO" id="GO:0006744">
    <property type="term" value="P:ubiquinone biosynthetic process"/>
    <property type="evidence" value="ECO:0007669"/>
    <property type="project" value="UniProtKB-UniRule"/>
</dbReference>
<dbReference type="CDD" id="cd13959">
    <property type="entry name" value="PT_UbiA_COQ2"/>
    <property type="match status" value="1"/>
</dbReference>
<dbReference type="FunFam" id="1.10.357.140:FF:000008">
    <property type="entry name" value="4-hydroxybenzoate octaprenyltransferase"/>
    <property type="match status" value="1"/>
</dbReference>
<dbReference type="FunFam" id="1.20.120.1780:FF:000001">
    <property type="entry name" value="4-hydroxybenzoate octaprenyltransferase"/>
    <property type="match status" value="1"/>
</dbReference>
<dbReference type="Gene3D" id="1.10.357.140">
    <property type="entry name" value="UbiA prenyltransferase"/>
    <property type="match status" value="1"/>
</dbReference>
<dbReference type="Gene3D" id="1.20.120.1780">
    <property type="entry name" value="UbiA prenyltransferase"/>
    <property type="match status" value="1"/>
</dbReference>
<dbReference type="HAMAP" id="MF_01635">
    <property type="entry name" value="UbiA"/>
    <property type="match status" value="1"/>
</dbReference>
<dbReference type="InterPro" id="IPR006370">
    <property type="entry name" value="HB_polyprenyltransferase-like"/>
</dbReference>
<dbReference type="InterPro" id="IPR039653">
    <property type="entry name" value="Prenyltransferase"/>
</dbReference>
<dbReference type="InterPro" id="IPR000537">
    <property type="entry name" value="UbiA_prenyltransferase"/>
</dbReference>
<dbReference type="InterPro" id="IPR030470">
    <property type="entry name" value="UbiA_prenylTrfase_CS"/>
</dbReference>
<dbReference type="InterPro" id="IPR044878">
    <property type="entry name" value="UbiA_sf"/>
</dbReference>
<dbReference type="NCBIfam" id="TIGR01474">
    <property type="entry name" value="ubiA_proteo"/>
    <property type="match status" value="1"/>
</dbReference>
<dbReference type="PANTHER" id="PTHR11048:SF28">
    <property type="entry name" value="4-HYDROXYBENZOATE POLYPRENYLTRANSFERASE, MITOCHONDRIAL"/>
    <property type="match status" value="1"/>
</dbReference>
<dbReference type="PANTHER" id="PTHR11048">
    <property type="entry name" value="PRENYLTRANSFERASES"/>
    <property type="match status" value="1"/>
</dbReference>
<dbReference type="Pfam" id="PF01040">
    <property type="entry name" value="UbiA"/>
    <property type="match status" value="1"/>
</dbReference>
<dbReference type="PROSITE" id="PS00943">
    <property type="entry name" value="UBIA"/>
    <property type="match status" value="1"/>
</dbReference>
<accession>A2SMA7</accession>
<keyword id="KW-0997">Cell inner membrane</keyword>
<keyword id="KW-1003">Cell membrane</keyword>
<keyword id="KW-0460">Magnesium</keyword>
<keyword id="KW-0472">Membrane</keyword>
<keyword id="KW-1185">Reference proteome</keyword>
<keyword id="KW-0808">Transferase</keyword>
<keyword id="KW-0812">Transmembrane</keyword>
<keyword id="KW-1133">Transmembrane helix</keyword>
<keyword id="KW-0831">Ubiquinone biosynthesis</keyword>
<protein>
    <recommendedName>
        <fullName evidence="1">4-hydroxybenzoate octaprenyltransferase</fullName>
        <ecNumber evidence="1">2.5.1.39</ecNumber>
    </recommendedName>
    <alternativeName>
        <fullName evidence="1">4-HB polyprenyltransferase</fullName>
    </alternativeName>
</protein>
<proteinExistence type="inferred from homology"/>
<feature type="chain" id="PRO_0000336980" description="4-hydroxybenzoate octaprenyltransferase">
    <location>
        <begin position="1"/>
        <end position="307"/>
    </location>
</feature>
<feature type="transmembrane region" description="Helical" evidence="1">
    <location>
        <begin position="27"/>
        <end position="47"/>
    </location>
</feature>
<feature type="transmembrane region" description="Helical" evidence="1">
    <location>
        <begin position="50"/>
        <end position="70"/>
    </location>
</feature>
<feature type="transmembrane region" description="Helical" evidence="1">
    <location>
        <begin position="101"/>
        <end position="121"/>
    </location>
</feature>
<feature type="transmembrane region" description="Helical" evidence="1">
    <location>
        <begin position="142"/>
        <end position="162"/>
    </location>
</feature>
<feature type="transmembrane region" description="Helical" evidence="1">
    <location>
        <begin position="179"/>
        <end position="199"/>
    </location>
</feature>
<feature type="transmembrane region" description="Helical" evidence="1">
    <location>
        <begin position="239"/>
        <end position="259"/>
    </location>
</feature>
<feature type="transmembrane region" description="Helical" evidence="1">
    <location>
        <begin position="285"/>
        <end position="305"/>
    </location>
</feature>
<comment type="function">
    <text evidence="1">Catalyzes the prenylation of para-hydroxybenzoate (PHB) with an all-trans polyprenyl group. Mediates the second step in the final reaction sequence of ubiquinone-8 (UQ-8) biosynthesis, which is the condensation of the polyisoprenoid side chain with PHB, generating the first membrane-bound Q intermediate 3-octaprenyl-4-hydroxybenzoate.</text>
</comment>
<comment type="catalytic activity">
    <reaction evidence="1">
        <text>all-trans-octaprenyl diphosphate + 4-hydroxybenzoate = 4-hydroxy-3-(all-trans-octaprenyl)benzoate + diphosphate</text>
        <dbReference type="Rhea" id="RHEA:27782"/>
        <dbReference type="ChEBI" id="CHEBI:1617"/>
        <dbReference type="ChEBI" id="CHEBI:17879"/>
        <dbReference type="ChEBI" id="CHEBI:33019"/>
        <dbReference type="ChEBI" id="CHEBI:57711"/>
        <dbReference type="EC" id="2.5.1.39"/>
    </reaction>
</comment>
<comment type="cofactor">
    <cofactor evidence="1">
        <name>Mg(2+)</name>
        <dbReference type="ChEBI" id="CHEBI:18420"/>
    </cofactor>
</comment>
<comment type="pathway">
    <text evidence="1">Cofactor biosynthesis; ubiquinone biosynthesis.</text>
</comment>
<comment type="subcellular location">
    <subcellularLocation>
        <location evidence="1">Cell inner membrane</location>
        <topology evidence="1">Multi-pass membrane protein</topology>
    </subcellularLocation>
</comment>
<comment type="similarity">
    <text evidence="1">Belongs to the UbiA prenyltransferase family.</text>
</comment>
<evidence type="ECO:0000255" key="1">
    <source>
        <dbReference type="HAMAP-Rule" id="MF_01635"/>
    </source>
</evidence>
<gene>
    <name evidence="1" type="primary">ubiA</name>
    <name type="ordered locus">Mpe_A3743</name>
</gene>
<name>UBIA_METPP</name>
<organism>
    <name type="scientific">Methylibium petroleiphilum (strain ATCC BAA-1232 / LMG 22953 / PM1)</name>
    <dbReference type="NCBI Taxonomy" id="420662"/>
    <lineage>
        <taxon>Bacteria</taxon>
        <taxon>Pseudomonadati</taxon>
        <taxon>Pseudomonadota</taxon>
        <taxon>Betaproteobacteria</taxon>
        <taxon>Burkholderiales</taxon>
        <taxon>Sphaerotilaceae</taxon>
        <taxon>Methylibium</taxon>
    </lineage>
</organism>